<keyword id="KW-1185">Reference proteome</keyword>
<feature type="chain" id="PRO_0000168657" description="Uncharacterized protein YlcG">
    <location>
        <begin position="1"/>
        <end position="46"/>
    </location>
</feature>
<comment type="induction">
    <text evidence="1">Expressed during stationary phase (at protein level).</text>
</comment>
<comment type="miscellaneous">
    <text>Encoded by the cryptic lambdoid prophage DLP12.</text>
</comment>
<comment type="similarity">
    <text evidence="2">To equivalent protein in phage 82.</text>
</comment>
<evidence type="ECO:0000269" key="1">
    <source>
    </source>
</evidence>
<evidence type="ECO:0000305" key="2"/>
<gene>
    <name type="primary">ylcG</name>
    <name type="ordered locus">b4509</name>
    <name type="ordered locus">JW5076</name>
</gene>
<protein>
    <recommendedName>
        <fullName>Uncharacterized protein YlcG</fullName>
    </recommendedName>
</protein>
<proteinExistence type="evidence at protein level"/>
<name>YLCG_ECOLI</name>
<dbReference type="EMBL" id="X92587">
    <property type="protein sequence ID" value="CAA63322.1"/>
    <property type="molecule type" value="Genomic_DNA"/>
</dbReference>
<dbReference type="EMBL" id="U00096">
    <property type="protein sequence ID" value="ABD18639.1"/>
    <property type="molecule type" value="Genomic_DNA"/>
</dbReference>
<dbReference type="EMBL" id="AP009048">
    <property type="protein sequence ID" value="BAE76326.1"/>
    <property type="molecule type" value="Genomic_DNA"/>
</dbReference>
<dbReference type="PIR" id="S66591">
    <property type="entry name" value="S66591"/>
</dbReference>
<dbReference type="RefSeq" id="WP_000971055.1">
    <property type="nucleotide sequence ID" value="NZ_LN832404.1"/>
</dbReference>
<dbReference type="RefSeq" id="YP_588439.1">
    <property type="nucleotide sequence ID" value="NC_000913.3"/>
</dbReference>
<dbReference type="BioGRID" id="4263291">
    <property type="interactions" value="134"/>
</dbReference>
<dbReference type="FunCoup" id="Q47272">
    <property type="interactions" value="77"/>
</dbReference>
<dbReference type="STRING" id="511145.b4509"/>
<dbReference type="PaxDb" id="511145-b4509"/>
<dbReference type="EnsemblBacteria" id="ABD18639">
    <property type="protein sequence ID" value="ABD18639"/>
    <property type="gene ID" value="b4509"/>
</dbReference>
<dbReference type="GeneID" id="1450240"/>
<dbReference type="KEGG" id="ecj:JW5076"/>
<dbReference type="KEGG" id="eco:b4509"/>
<dbReference type="KEGG" id="ecoc:C3026_02715"/>
<dbReference type="PATRIC" id="fig|511145.12.peg.572"/>
<dbReference type="HOGENOM" id="CLU_216458_1_0_6"/>
<dbReference type="InParanoid" id="Q47272"/>
<dbReference type="OrthoDB" id="6570138at2"/>
<dbReference type="PhylomeDB" id="Q47272"/>
<dbReference type="BioCyc" id="EcoCyc:MONOMER0-2657"/>
<dbReference type="PRO" id="PR:Q47272"/>
<dbReference type="Proteomes" id="UP000000625">
    <property type="component" value="Chromosome"/>
</dbReference>
<dbReference type="InterPro" id="IPR049596">
    <property type="entry name" value="YlcG-like"/>
</dbReference>
<dbReference type="NCBIfam" id="NF033498">
    <property type="entry name" value="YlcG_phage_expr"/>
    <property type="match status" value="1"/>
</dbReference>
<reference key="1">
    <citation type="journal article" date="1996" name="J. Mol. Biol.">
        <title>Holliday junction resolvases encoded by homologous rusA genes in Escherichia coli K-12 and phage 82.</title>
        <authorList>
            <person name="Mahdi A.A."/>
            <person name="Sharples G.J."/>
            <person name="Mandal T.N."/>
            <person name="Lloyd R.G."/>
        </authorList>
    </citation>
    <scope>NUCLEOTIDE SEQUENCE [GENOMIC DNA]</scope>
    <source>
        <strain>K12 / MG1655 / ATCC 47076</strain>
    </source>
</reference>
<reference key="2">
    <citation type="journal article" date="1997" name="Science">
        <title>The complete genome sequence of Escherichia coli K-12.</title>
        <authorList>
            <person name="Blattner F.R."/>
            <person name="Plunkett G. III"/>
            <person name="Bloch C.A."/>
            <person name="Perna N.T."/>
            <person name="Burland V."/>
            <person name="Riley M."/>
            <person name="Collado-Vides J."/>
            <person name="Glasner J.D."/>
            <person name="Rode C.K."/>
            <person name="Mayhew G.F."/>
            <person name="Gregor J."/>
            <person name="Davis N.W."/>
            <person name="Kirkpatrick H.A."/>
            <person name="Goeden M.A."/>
            <person name="Rose D.J."/>
            <person name="Mau B."/>
            <person name="Shao Y."/>
        </authorList>
    </citation>
    <scope>NUCLEOTIDE SEQUENCE [LARGE SCALE GENOMIC DNA]</scope>
    <source>
        <strain>K12 / MG1655 / ATCC 47076</strain>
    </source>
</reference>
<reference key="3">
    <citation type="journal article" date="2006" name="Mol. Syst. Biol.">
        <title>Highly accurate genome sequences of Escherichia coli K-12 strains MG1655 and W3110.</title>
        <authorList>
            <person name="Hayashi K."/>
            <person name="Morooka N."/>
            <person name="Yamamoto Y."/>
            <person name="Fujita K."/>
            <person name="Isono K."/>
            <person name="Choi S."/>
            <person name="Ohtsubo E."/>
            <person name="Baba T."/>
            <person name="Wanner B.L."/>
            <person name="Mori H."/>
            <person name="Horiuchi T."/>
        </authorList>
    </citation>
    <scope>NUCLEOTIDE SEQUENCE [LARGE SCALE GENOMIC DNA]</scope>
    <source>
        <strain>K12 / W3110 / ATCC 27325 / DSM 5911</strain>
    </source>
</reference>
<reference key="4">
    <citation type="journal article" date="2008" name="Mol. Microbiol.">
        <title>Small membrane proteins found by comparative genomics and ribosome binding site models.</title>
        <authorList>
            <person name="Hemm M.R."/>
            <person name="Paul B.J."/>
            <person name="Schneider T.D."/>
            <person name="Storz G."/>
            <person name="Rudd K.E."/>
        </authorList>
    </citation>
    <scope>INDUCTION</scope>
    <source>
        <strain>K12 / MG1655 / ATCC 47076</strain>
    </source>
</reference>
<organism>
    <name type="scientific">Escherichia coli (strain K12)</name>
    <dbReference type="NCBI Taxonomy" id="83333"/>
    <lineage>
        <taxon>Bacteria</taxon>
        <taxon>Pseudomonadati</taxon>
        <taxon>Pseudomonadota</taxon>
        <taxon>Gammaproteobacteria</taxon>
        <taxon>Enterobacterales</taxon>
        <taxon>Enterobacteriaceae</taxon>
        <taxon>Escherichia</taxon>
    </lineage>
</organism>
<sequence>MMFEFNMAELLRHRWGRLRLYRFPGSVLTDYRILKNYAKTLTGAGV</sequence>
<accession>Q47272</accession>
<accession>Q2EEQ4</accession>
<accession>Q2MBN0</accession>